<name>OTU6B_HUMAN</name>
<accession>Q8N6M0</accession>
<accession>A8K6I1</accession>
<accession>B4DEY0</accession>
<accession>Q9NTA4</accession>
<accession>Q9Y387</accession>
<keyword id="KW-0007">Acetylation</keyword>
<keyword id="KW-0025">Alternative splicing</keyword>
<keyword id="KW-0225">Disease variant</keyword>
<keyword id="KW-0887">Epilepsy</keyword>
<keyword id="KW-0378">Hydrolase</keyword>
<keyword id="KW-0991">Intellectual disability</keyword>
<keyword id="KW-0645">Protease</keyword>
<keyword id="KW-1267">Proteomics identification</keyword>
<keyword id="KW-1185">Reference proteome</keyword>
<keyword id="KW-0788">Thiol protease</keyword>
<keyword id="KW-0833">Ubl conjugation pathway</keyword>
<organism>
    <name type="scientific">Homo sapiens</name>
    <name type="common">Human</name>
    <dbReference type="NCBI Taxonomy" id="9606"/>
    <lineage>
        <taxon>Eukaryota</taxon>
        <taxon>Metazoa</taxon>
        <taxon>Chordata</taxon>
        <taxon>Craniata</taxon>
        <taxon>Vertebrata</taxon>
        <taxon>Euteleostomi</taxon>
        <taxon>Mammalia</taxon>
        <taxon>Eutheria</taxon>
        <taxon>Euarchontoglires</taxon>
        <taxon>Primates</taxon>
        <taxon>Haplorrhini</taxon>
        <taxon>Catarrhini</taxon>
        <taxon>Hominidae</taxon>
        <taxon>Homo</taxon>
    </lineage>
</organism>
<sequence>MEAVLTEELDEEEQLLRRHRKEKKELQAKIQGMKNAVPKNDKKRRKQLTEDVAKLEKEMEQKHREELEQLKLTTKENKIDSVAVNISNLVLENQPPRISKAQKRREKKAALEKEREERIAEAEIENLTGARHMESEKLAQILAARQLEIKQIPSDGHCMYKAIEDQLKEKDCALTVVALRSQTAEYMQSHVEDFLPFLTNPNTGDMYTPEEFQKYCEDIVNTAAWGGQLELRALSHILQTPIEIIQADSPPIIVGEEYSKKPLILVYMRHAYGLGEHYNSVTRLVNIVTENCS</sequence>
<evidence type="ECO:0000250" key="1"/>
<evidence type="ECO:0000255" key="2">
    <source>
        <dbReference type="PROSITE-ProRule" id="PRU00139"/>
    </source>
</evidence>
<evidence type="ECO:0000269" key="3">
    <source>
    </source>
</evidence>
<evidence type="ECO:0000269" key="4">
    <source>
    </source>
</evidence>
<evidence type="ECO:0000269" key="5">
    <source>
    </source>
</evidence>
<evidence type="ECO:0000269" key="6">
    <source>
    </source>
</evidence>
<evidence type="ECO:0000269" key="7">
    <source>
    </source>
</evidence>
<evidence type="ECO:0000303" key="8">
    <source>
    </source>
</evidence>
<evidence type="ECO:0000303" key="9">
    <source>
    </source>
</evidence>
<evidence type="ECO:0000303" key="10">
    <source>
    </source>
</evidence>
<evidence type="ECO:0000305" key="11"/>
<evidence type="ECO:0000305" key="12">
    <source>
    </source>
</evidence>
<evidence type="ECO:0000312" key="13">
    <source>
        <dbReference type="HGNC" id="HGNC:24281"/>
    </source>
</evidence>
<evidence type="ECO:0007744" key="14">
    <source>
    </source>
</evidence>
<evidence type="ECO:0007744" key="15">
    <source>
    </source>
</evidence>
<proteinExistence type="evidence at protein level"/>
<gene>
    <name evidence="13" type="primary">OTUD6B</name>
    <name type="synonym">DUBA5</name>
    <name evidence="8" type="ORF">CGI-77</name>
</gene>
<feature type="chain" id="PRO_0000076279" description="Deubiquitinase OTUD6B">
    <location>
        <begin position="1"/>
        <end position="293"/>
    </location>
</feature>
<feature type="domain" description="OTU" evidence="2">
    <location>
        <begin position="147"/>
        <end position="284"/>
    </location>
</feature>
<feature type="region of interest" description="Cys-loop" evidence="1">
    <location>
        <begin position="152"/>
        <end position="158"/>
    </location>
</feature>
<feature type="region of interest" description="Variable-loop" evidence="1">
    <location>
        <begin position="219"/>
        <end position="229"/>
    </location>
</feature>
<feature type="region of interest" description="His-loop" evidence="1">
    <location>
        <begin position="267"/>
        <end position="277"/>
    </location>
</feature>
<feature type="active site" evidence="1">
    <location>
        <position position="155"/>
    </location>
</feature>
<feature type="active site" description="Nucleophile" evidence="12">
    <location>
        <position position="158"/>
    </location>
</feature>
<feature type="active site" evidence="1">
    <location>
        <position position="277"/>
    </location>
</feature>
<feature type="modified residue" description="N-acetylmethionine" evidence="14 15">
    <location>
        <position position="1"/>
    </location>
</feature>
<feature type="splice variant" id="VSP_055378" description="In isoform 2." evidence="9">
    <original>MEAVLTEELDEEEQLLRRHRKEKKELQAKIQGMKNAVPKNDKKRRKQLTEDVAKLEKEMEQKHREELEQLKLTTKENKIDSVAVNISNLVLENQPPRISKAQKRR</original>
    <variation>MISK</variation>
    <location>
        <begin position="1"/>
        <end position="105"/>
    </location>
</feature>
<feature type="sequence variant" id="VAR_080403" description="In IDDFSDA; dbSNP:rs368313959." evidence="7">
    <location>
        <begin position="145"/>
        <end position="293"/>
    </location>
</feature>
<feature type="sequence variant" id="VAR_080404" description="In IDDFSDA; uncertain significance; dbSNP:rs1064797103." evidence="7">
    <original>Y</original>
    <variation>C</variation>
    <location>
        <position position="186"/>
    </location>
</feature>
<feature type="sequence variant" id="VAR_034144" description="In dbSNP:rs3210518." evidence="3">
    <original>R</original>
    <variation>Q</variation>
    <location>
        <position position="283"/>
    </location>
</feature>
<feature type="mutagenesis site" description="Abolishes the deubiquitinating enzyme activity." evidence="4">
    <original>C</original>
    <variation>S</variation>
    <location>
        <position position="158"/>
    </location>
</feature>
<feature type="sequence conflict" description="In Ref. 1; AAD34073." evidence="11" ref="1">
    <original>VNIVTENCS</original>
    <variation>GKHSY</variation>
    <location>
        <begin position="285"/>
        <end position="293"/>
    </location>
</feature>
<reference key="1">
    <citation type="journal article" date="2000" name="Genome Res.">
        <title>Identification of novel human genes evolutionarily conserved in Caenorhabditis elegans by comparative proteomics.</title>
        <authorList>
            <person name="Lai C.-H."/>
            <person name="Chou C.-Y."/>
            <person name="Ch'ang L.-Y."/>
            <person name="Liu C.-S."/>
            <person name="Lin W.-C."/>
        </authorList>
    </citation>
    <scope>NUCLEOTIDE SEQUENCE [LARGE SCALE MRNA] (ISOFORM 1)</scope>
</reference>
<reference key="2">
    <citation type="journal article" date="2004" name="Nat. Genet.">
        <title>Complete sequencing and characterization of 21,243 full-length human cDNAs.</title>
        <authorList>
            <person name="Ota T."/>
            <person name="Suzuki Y."/>
            <person name="Nishikawa T."/>
            <person name="Otsuki T."/>
            <person name="Sugiyama T."/>
            <person name="Irie R."/>
            <person name="Wakamatsu A."/>
            <person name="Hayashi K."/>
            <person name="Sato H."/>
            <person name="Nagai K."/>
            <person name="Kimura K."/>
            <person name="Makita H."/>
            <person name="Sekine M."/>
            <person name="Obayashi M."/>
            <person name="Nishi T."/>
            <person name="Shibahara T."/>
            <person name="Tanaka T."/>
            <person name="Ishii S."/>
            <person name="Yamamoto J."/>
            <person name="Saito K."/>
            <person name="Kawai Y."/>
            <person name="Isono Y."/>
            <person name="Nakamura Y."/>
            <person name="Nagahari K."/>
            <person name="Murakami K."/>
            <person name="Yasuda T."/>
            <person name="Iwayanagi T."/>
            <person name="Wagatsuma M."/>
            <person name="Shiratori A."/>
            <person name="Sudo H."/>
            <person name="Hosoiri T."/>
            <person name="Kaku Y."/>
            <person name="Kodaira H."/>
            <person name="Kondo H."/>
            <person name="Sugawara M."/>
            <person name="Takahashi M."/>
            <person name="Kanda K."/>
            <person name="Yokoi T."/>
            <person name="Furuya T."/>
            <person name="Kikkawa E."/>
            <person name="Omura Y."/>
            <person name="Abe K."/>
            <person name="Kamihara K."/>
            <person name="Katsuta N."/>
            <person name="Sato K."/>
            <person name="Tanikawa M."/>
            <person name="Yamazaki M."/>
            <person name="Ninomiya K."/>
            <person name="Ishibashi T."/>
            <person name="Yamashita H."/>
            <person name="Murakawa K."/>
            <person name="Fujimori K."/>
            <person name="Tanai H."/>
            <person name="Kimata M."/>
            <person name="Watanabe M."/>
            <person name="Hiraoka S."/>
            <person name="Chiba Y."/>
            <person name="Ishida S."/>
            <person name="Ono Y."/>
            <person name="Takiguchi S."/>
            <person name="Watanabe S."/>
            <person name="Yosida M."/>
            <person name="Hotuta T."/>
            <person name="Kusano J."/>
            <person name="Kanehori K."/>
            <person name="Takahashi-Fujii A."/>
            <person name="Hara H."/>
            <person name="Tanase T.-O."/>
            <person name="Nomura Y."/>
            <person name="Togiya S."/>
            <person name="Komai F."/>
            <person name="Hara R."/>
            <person name="Takeuchi K."/>
            <person name="Arita M."/>
            <person name="Imose N."/>
            <person name="Musashino K."/>
            <person name="Yuuki H."/>
            <person name="Oshima A."/>
            <person name="Sasaki N."/>
            <person name="Aotsuka S."/>
            <person name="Yoshikawa Y."/>
            <person name="Matsunawa H."/>
            <person name="Ichihara T."/>
            <person name="Shiohata N."/>
            <person name="Sano S."/>
            <person name="Moriya S."/>
            <person name="Momiyama H."/>
            <person name="Satoh N."/>
            <person name="Takami S."/>
            <person name="Terashima Y."/>
            <person name="Suzuki O."/>
            <person name="Nakagawa S."/>
            <person name="Senoh A."/>
            <person name="Mizoguchi H."/>
            <person name="Goto Y."/>
            <person name="Shimizu F."/>
            <person name="Wakebe H."/>
            <person name="Hishigaki H."/>
            <person name="Watanabe T."/>
            <person name="Sugiyama A."/>
            <person name="Takemoto M."/>
            <person name="Kawakami B."/>
            <person name="Yamazaki M."/>
            <person name="Watanabe K."/>
            <person name="Kumagai A."/>
            <person name="Itakura S."/>
            <person name="Fukuzumi Y."/>
            <person name="Fujimori Y."/>
            <person name="Komiyama M."/>
            <person name="Tashiro H."/>
            <person name="Tanigami A."/>
            <person name="Fujiwara T."/>
            <person name="Ono T."/>
            <person name="Yamada K."/>
            <person name="Fujii Y."/>
            <person name="Ozaki K."/>
            <person name="Hirao M."/>
            <person name="Ohmori Y."/>
            <person name="Kawabata A."/>
            <person name="Hikiji T."/>
            <person name="Kobatake N."/>
            <person name="Inagaki H."/>
            <person name="Ikema Y."/>
            <person name="Okamoto S."/>
            <person name="Okitani R."/>
            <person name="Kawakami T."/>
            <person name="Noguchi S."/>
            <person name="Itoh T."/>
            <person name="Shigeta K."/>
            <person name="Senba T."/>
            <person name="Matsumura K."/>
            <person name="Nakajima Y."/>
            <person name="Mizuno T."/>
            <person name="Morinaga M."/>
            <person name="Sasaki M."/>
            <person name="Togashi T."/>
            <person name="Oyama M."/>
            <person name="Hata H."/>
            <person name="Watanabe M."/>
            <person name="Komatsu T."/>
            <person name="Mizushima-Sugano J."/>
            <person name="Satoh T."/>
            <person name="Shirai Y."/>
            <person name="Takahashi Y."/>
            <person name="Nakagawa K."/>
            <person name="Okumura K."/>
            <person name="Nagase T."/>
            <person name="Nomura N."/>
            <person name="Kikuchi H."/>
            <person name="Masuho Y."/>
            <person name="Yamashita R."/>
            <person name="Nakai K."/>
            <person name="Yada T."/>
            <person name="Nakamura Y."/>
            <person name="Ohara O."/>
            <person name="Isogai T."/>
            <person name="Sugano S."/>
        </authorList>
    </citation>
    <scope>NUCLEOTIDE SEQUENCE [LARGE SCALE MRNA] (ISOFORMS 1 AND 2)</scope>
    <source>
        <tissue>Cerebellum</tissue>
        <tissue>Placenta</tissue>
    </source>
</reference>
<reference key="3">
    <citation type="journal article" date="2006" name="Nature">
        <title>DNA sequence and analysis of human chromosome 8.</title>
        <authorList>
            <person name="Nusbaum C."/>
            <person name="Mikkelsen T.S."/>
            <person name="Zody M.C."/>
            <person name="Asakawa S."/>
            <person name="Taudien S."/>
            <person name="Garber M."/>
            <person name="Kodira C.D."/>
            <person name="Schueler M.G."/>
            <person name="Shimizu A."/>
            <person name="Whittaker C.A."/>
            <person name="Chang J.L."/>
            <person name="Cuomo C.A."/>
            <person name="Dewar K."/>
            <person name="FitzGerald M.G."/>
            <person name="Yang X."/>
            <person name="Allen N.R."/>
            <person name="Anderson S."/>
            <person name="Asakawa T."/>
            <person name="Blechschmidt K."/>
            <person name="Bloom T."/>
            <person name="Borowsky M.L."/>
            <person name="Butler J."/>
            <person name="Cook A."/>
            <person name="Corum B."/>
            <person name="DeArellano K."/>
            <person name="DeCaprio D."/>
            <person name="Dooley K.T."/>
            <person name="Dorris L. III"/>
            <person name="Engels R."/>
            <person name="Gloeckner G."/>
            <person name="Hafez N."/>
            <person name="Hagopian D.S."/>
            <person name="Hall J.L."/>
            <person name="Ishikawa S.K."/>
            <person name="Jaffe D.B."/>
            <person name="Kamat A."/>
            <person name="Kudoh J."/>
            <person name="Lehmann R."/>
            <person name="Lokitsang T."/>
            <person name="Macdonald P."/>
            <person name="Major J.E."/>
            <person name="Matthews C.D."/>
            <person name="Mauceli E."/>
            <person name="Menzel U."/>
            <person name="Mihalev A.H."/>
            <person name="Minoshima S."/>
            <person name="Murayama Y."/>
            <person name="Naylor J.W."/>
            <person name="Nicol R."/>
            <person name="Nguyen C."/>
            <person name="O'Leary S.B."/>
            <person name="O'Neill K."/>
            <person name="Parker S.C.J."/>
            <person name="Polley A."/>
            <person name="Raymond C.K."/>
            <person name="Reichwald K."/>
            <person name="Rodriguez J."/>
            <person name="Sasaki T."/>
            <person name="Schilhabel M."/>
            <person name="Siddiqui R."/>
            <person name="Smith C.L."/>
            <person name="Sneddon T.P."/>
            <person name="Talamas J.A."/>
            <person name="Tenzin P."/>
            <person name="Topham K."/>
            <person name="Venkataraman V."/>
            <person name="Wen G."/>
            <person name="Yamazaki S."/>
            <person name="Young S.K."/>
            <person name="Zeng Q."/>
            <person name="Zimmer A.R."/>
            <person name="Rosenthal A."/>
            <person name="Birren B.W."/>
            <person name="Platzer M."/>
            <person name="Shimizu N."/>
            <person name="Lander E.S."/>
        </authorList>
    </citation>
    <scope>NUCLEOTIDE SEQUENCE [LARGE SCALE GENOMIC DNA]</scope>
</reference>
<reference key="4">
    <citation type="journal article" date="2004" name="Genome Res.">
        <title>The status, quality, and expansion of the NIH full-length cDNA project: the Mammalian Gene Collection (MGC).</title>
        <authorList>
            <consortium name="The MGC Project Team"/>
        </authorList>
    </citation>
    <scope>NUCLEOTIDE SEQUENCE [LARGE SCALE MRNA] (ISOFORM 1)</scope>
    <source>
        <tissue>Lymph</tissue>
    </source>
</reference>
<reference key="5">
    <citation type="journal article" date="2007" name="BMC Genomics">
        <title>The full-ORF clone resource of the German cDNA consortium.</title>
        <authorList>
            <person name="Bechtel S."/>
            <person name="Rosenfelder H."/>
            <person name="Duda A."/>
            <person name="Schmidt C.P."/>
            <person name="Ernst U."/>
            <person name="Wellenreuther R."/>
            <person name="Mehrle A."/>
            <person name="Schuster C."/>
            <person name="Bahr A."/>
            <person name="Bloecker H."/>
            <person name="Heubner D."/>
            <person name="Hoerlein A."/>
            <person name="Michel G."/>
            <person name="Wedler H."/>
            <person name="Koehrer K."/>
            <person name="Ottenwaelder B."/>
            <person name="Poustka A."/>
            <person name="Wiemann S."/>
            <person name="Schupp I."/>
        </authorList>
    </citation>
    <scope>NUCLEOTIDE SEQUENCE [LARGE SCALE MRNA] OF 67-293 (ISOFORM 1)</scope>
    <scope>VARIANT GLN-283</scope>
    <source>
        <tissue>Amygdala</tissue>
    </source>
</reference>
<reference key="6">
    <citation type="journal article" date="2013" name="Cell">
        <title>OTU deubiquitinases reveal mechanisms of linkage specificity and enable ubiquitin chain restriction analysis.</title>
        <authorList>
            <person name="Mevissen T.E."/>
            <person name="Hospenthal M.K."/>
            <person name="Geurink P.P."/>
            <person name="Elliott P.R."/>
            <person name="Akutsu M."/>
            <person name="Arnaudo N."/>
            <person name="Ekkebus R."/>
            <person name="Kulathu Y."/>
            <person name="Wauer T."/>
            <person name="El Oualid F."/>
            <person name="Freund S.M."/>
            <person name="Ovaa H."/>
            <person name="Komander D."/>
        </authorList>
    </citation>
    <scope>IDENTIFICATION</scope>
</reference>
<reference key="7">
    <citation type="journal article" date="2009" name="Anal. Chem.">
        <title>Lys-N and trypsin cover complementary parts of the phosphoproteome in a refined SCX-based approach.</title>
        <authorList>
            <person name="Gauci S."/>
            <person name="Helbig A.O."/>
            <person name="Slijper M."/>
            <person name="Krijgsveld J."/>
            <person name="Heck A.J."/>
            <person name="Mohammed S."/>
        </authorList>
    </citation>
    <scope>ACETYLATION [LARGE SCALE ANALYSIS] AT MET-1</scope>
    <scope>IDENTIFICATION BY MASS SPECTROMETRY [LARGE SCALE ANALYSIS]</scope>
</reference>
<reference key="8">
    <citation type="journal article" date="2011" name="BMC Syst. Biol.">
        <title>Initial characterization of the human central proteome.</title>
        <authorList>
            <person name="Burkard T.R."/>
            <person name="Planyavsky M."/>
            <person name="Kaupe I."/>
            <person name="Breitwieser F.P."/>
            <person name="Buerckstuemmer T."/>
            <person name="Bennett K.L."/>
            <person name="Superti-Furga G."/>
            <person name="Colinge J."/>
        </authorList>
    </citation>
    <scope>IDENTIFICATION BY MASS SPECTROMETRY [LARGE SCALE ANALYSIS]</scope>
</reference>
<reference key="9">
    <citation type="journal article" date="2011" name="PLoS ONE">
        <title>Evidence for OTUD-6B participation in B lymphocytes cell cycle after cytokine stimulation.</title>
        <authorList>
            <person name="Xu Z."/>
            <person name="Zheng Y."/>
            <person name="Zhu Y."/>
            <person name="Kong X."/>
            <person name="Hu L."/>
        </authorList>
    </citation>
    <scope>FUNCTION</scope>
    <scope>CATALYTIC ACTIVITY</scope>
    <scope>ACTIVE SITE</scope>
    <scope>MUTAGENESIS OF CYS-158</scope>
</reference>
<reference key="10">
    <citation type="journal article" date="2012" name="Proc. Natl. Acad. Sci. U.S.A.">
        <title>N-terminal acetylome analyses and functional insights of the N-terminal acetyltransferase NatB.</title>
        <authorList>
            <person name="Van Damme P."/>
            <person name="Lasa M."/>
            <person name="Polevoda B."/>
            <person name="Gazquez C."/>
            <person name="Elosegui-Artola A."/>
            <person name="Kim D.S."/>
            <person name="De Juan-Pardo E."/>
            <person name="Demeyer K."/>
            <person name="Hole K."/>
            <person name="Larrea E."/>
            <person name="Timmerman E."/>
            <person name="Prieto J."/>
            <person name="Arnesen T."/>
            <person name="Sherman F."/>
            <person name="Gevaert K."/>
            <person name="Aldabe R."/>
        </authorList>
    </citation>
    <scope>ACETYLATION [LARGE SCALE ANALYSIS] AT MET-1</scope>
    <scope>IDENTIFICATION BY MASS SPECTROMETRY [LARGE SCALE ANALYSIS]</scope>
</reference>
<reference key="11">
    <citation type="journal article" date="2017" name="Am. J. Hum. Genet.">
        <title>Biallelic variants in OTUD6B cause an intellectual disability syndrome associated with seizures and dysmorphic features.</title>
        <authorList>
            <consortium name="EuroEPINOMICS RES Consortium Autosomal Recessive working group, S. Hande Caglayan"/>
            <person name="Santiago-Sim T."/>
            <person name="Burrage L.C."/>
            <person name="Ebstein F."/>
            <person name="Tokita M.J."/>
            <person name="Miller M."/>
            <person name="Bi W."/>
            <person name="Braxton A.A."/>
            <person name="Rosenfeld J.A."/>
            <person name="Shahrour M."/>
            <person name="Lehmann A."/>
            <person name="Cogne B."/>
            <person name="Kuery S."/>
            <person name="Besnard T."/>
            <person name="Isidor B."/>
            <person name="Bezieau S."/>
            <person name="Hazart I."/>
            <person name="Nagakura H."/>
            <person name="Immken L.L."/>
            <person name="Littlejohn R.O."/>
            <person name="Roeder E."/>
            <person name="Kara B."/>
            <person name="Hardies K."/>
            <person name="Weckhuysen S."/>
            <person name="May P."/>
            <person name="Lemke J.R."/>
            <person name="Elpeleg O."/>
            <person name="Abu-Libdeh B."/>
            <person name="James K.N."/>
            <person name="Silhavy J.L."/>
            <person name="Issa M.Y."/>
            <person name="Zaki M.S."/>
            <person name="Gleeson J.G."/>
            <person name="Seavitt J.R."/>
            <person name="Dickinson M.E."/>
            <person name="Ljungberg M.C."/>
            <person name="Wells S."/>
            <person name="Johnson S.J."/>
            <person name="Teboul L."/>
            <person name="Eng C.M."/>
            <person name="Yang Y."/>
            <person name="Kloetzel P.M."/>
            <person name="Heaney J.D."/>
            <person name="Walkiewicz M.A."/>
        </authorList>
    </citation>
    <scope>FUNCTION</scope>
    <scope>INVOLVEMENT IN IDDFSDA</scope>
    <scope>VARIANTS IDDFSDA 145-ARG--SER-293 DEL AND CYS-186</scope>
</reference>
<reference key="12">
    <citation type="journal article" date="2017" name="Mol. Cancer Res.">
        <title>Deubiquitinase OTUD6B isoforms are important regulators of growth and proliferation.</title>
        <authorList>
            <person name="Sobol A."/>
            <person name="Askonas C."/>
            <person name="Alani S."/>
            <person name="Weber M.J."/>
            <person name="Ananthanarayanan V."/>
            <person name="Osipo C."/>
            <person name="Bocchetta M."/>
        </authorList>
    </citation>
    <scope>FUNCTION IN PROTEIN SYNTHESIS</scope>
    <scope>INTERACTION WITH THE EUKARYOTIC TRANSLATION INITIATION FACTOR 4F COMPLEX</scope>
</reference>
<protein>
    <recommendedName>
        <fullName evidence="11">Deubiquitinase OTUD6B</fullName>
        <ecNumber evidence="4">3.4.19.12</ecNumber>
    </recommendedName>
    <alternativeName>
        <fullName>DUBA-5</fullName>
    </alternativeName>
    <alternativeName>
        <fullName evidence="13">OTU domain-containing protein 6B</fullName>
    </alternativeName>
</protein>
<dbReference type="EC" id="3.4.19.12" evidence="4"/>
<dbReference type="EMBL" id="AF151836">
    <property type="protein sequence ID" value="AAD34073.1"/>
    <property type="molecule type" value="mRNA"/>
</dbReference>
<dbReference type="EMBL" id="AK291646">
    <property type="protein sequence ID" value="BAF84335.1"/>
    <property type="molecule type" value="mRNA"/>
</dbReference>
<dbReference type="EMBL" id="AK293843">
    <property type="protein sequence ID" value="BAG57241.1"/>
    <property type="molecule type" value="mRNA"/>
</dbReference>
<dbReference type="EMBL" id="AC087439">
    <property type="status" value="NOT_ANNOTATED_CDS"/>
    <property type="molecule type" value="Genomic_DNA"/>
</dbReference>
<dbReference type="EMBL" id="BC029760">
    <property type="protein sequence ID" value="AAH29760.1"/>
    <property type="molecule type" value="mRNA"/>
</dbReference>
<dbReference type="EMBL" id="AL137441">
    <property type="protein sequence ID" value="CAB70738.1"/>
    <property type="molecule type" value="mRNA"/>
</dbReference>
<dbReference type="CCDS" id="CCDS6253.3">
    <molecule id="Q8N6M0-1"/>
</dbReference>
<dbReference type="CCDS" id="CCDS69513.1">
    <molecule id="Q8N6M0-2"/>
</dbReference>
<dbReference type="PIR" id="T46264">
    <property type="entry name" value="T46264"/>
</dbReference>
<dbReference type="RefSeq" id="NP_001273674.1">
    <molecule id="Q8N6M0-2"/>
    <property type="nucleotide sequence ID" value="NM_001286745.3"/>
</dbReference>
<dbReference type="RefSeq" id="NP_057107.3">
    <molecule id="Q8N6M0-1"/>
    <property type="nucleotide sequence ID" value="NM_016023.3"/>
</dbReference>
<dbReference type="RefSeq" id="XP_011515431.2">
    <molecule id="Q8N6M0-2"/>
    <property type="nucleotide sequence ID" value="XM_011517129.3"/>
</dbReference>
<dbReference type="RefSeq" id="XP_054216621.1">
    <molecule id="Q8N6M0-2"/>
    <property type="nucleotide sequence ID" value="XM_054360646.1"/>
</dbReference>
<dbReference type="SMR" id="Q8N6M0"/>
<dbReference type="BioGRID" id="119647">
    <property type="interactions" value="89"/>
</dbReference>
<dbReference type="FunCoup" id="Q8N6M0">
    <property type="interactions" value="3142"/>
</dbReference>
<dbReference type="IntAct" id="Q8N6M0">
    <property type="interactions" value="21"/>
</dbReference>
<dbReference type="MINT" id="Q8N6M0"/>
<dbReference type="STRING" id="9606.ENSP00000285420"/>
<dbReference type="BindingDB" id="Q8N6M0"/>
<dbReference type="ChEMBL" id="CHEMBL4630843"/>
<dbReference type="MEROPS" id="C85.009"/>
<dbReference type="GlyGen" id="Q8N6M0">
    <property type="glycosylation" value="1 site, 1 O-linked glycan (1 site)"/>
</dbReference>
<dbReference type="iPTMnet" id="Q8N6M0"/>
<dbReference type="PhosphoSitePlus" id="Q8N6M0"/>
<dbReference type="BioMuta" id="OTUD6B"/>
<dbReference type="DMDM" id="74729149"/>
<dbReference type="jPOST" id="Q8N6M0"/>
<dbReference type="MassIVE" id="Q8N6M0"/>
<dbReference type="PaxDb" id="9606-ENSP00000285420"/>
<dbReference type="PeptideAtlas" id="Q8N6M0"/>
<dbReference type="ProteomicsDB" id="72191">
    <molecule id="Q8N6M0-1"/>
</dbReference>
<dbReference type="Pumba" id="Q8N6M0"/>
<dbReference type="Antibodypedia" id="12759">
    <property type="antibodies" value="150 antibodies from 23 providers"/>
</dbReference>
<dbReference type="DNASU" id="51633"/>
<dbReference type="Ensembl" id="ENST00000404789.8">
    <molecule id="Q8N6M0-1"/>
    <property type="protein sequence ID" value="ENSP00000384190.4"/>
    <property type="gene ID" value="ENSG00000155100.11"/>
</dbReference>
<dbReference type="Ensembl" id="ENST00000615618.1">
    <molecule id="Q8N6M0-2"/>
    <property type="protein sequence ID" value="ENSP00000481196.1"/>
    <property type="gene ID" value="ENSG00000155100.11"/>
</dbReference>
<dbReference type="GeneID" id="51633"/>
<dbReference type="KEGG" id="hsa:51633"/>
<dbReference type="MANE-Select" id="ENST00000404789.8">
    <property type="protein sequence ID" value="ENSP00000384190.4"/>
    <property type="RefSeq nucleotide sequence ID" value="NM_016023.5"/>
    <property type="RefSeq protein sequence ID" value="NP_057107.4"/>
</dbReference>
<dbReference type="UCSC" id="uc011lgh.3">
    <molecule id="Q8N6M0-1"/>
    <property type="organism name" value="human"/>
</dbReference>
<dbReference type="AGR" id="HGNC:24281"/>
<dbReference type="CTD" id="51633"/>
<dbReference type="DisGeNET" id="51633"/>
<dbReference type="GeneCards" id="OTUD6B"/>
<dbReference type="HGNC" id="HGNC:24281">
    <property type="gene designation" value="OTUD6B"/>
</dbReference>
<dbReference type="HPA" id="ENSG00000155100">
    <property type="expression patterns" value="Low tissue specificity"/>
</dbReference>
<dbReference type="MalaCards" id="OTUD6B"/>
<dbReference type="MIM" id="612021">
    <property type="type" value="gene"/>
</dbReference>
<dbReference type="MIM" id="617452">
    <property type="type" value="phenotype"/>
</dbReference>
<dbReference type="neXtProt" id="NX_Q8N6M0"/>
<dbReference type="OpenTargets" id="ENSG00000155100"/>
<dbReference type="Orphanet" id="505237">
    <property type="disease" value="Early-onset seizures-distal limb anomalies-facial dysmorphism-global developmental delay syndrome"/>
</dbReference>
<dbReference type="PharmGKB" id="PA142671219"/>
<dbReference type="VEuPathDB" id="HostDB:ENSG00000155100"/>
<dbReference type="eggNOG" id="KOG2606">
    <property type="taxonomic scope" value="Eukaryota"/>
</dbReference>
<dbReference type="GeneTree" id="ENSGT00390000012840"/>
<dbReference type="HOGENOM" id="CLU_034963_0_1_1"/>
<dbReference type="InParanoid" id="Q8N6M0"/>
<dbReference type="OrthoDB" id="415023at2759"/>
<dbReference type="PAN-GO" id="Q8N6M0">
    <property type="GO annotations" value="2 GO annotations based on evolutionary models"/>
</dbReference>
<dbReference type="PhylomeDB" id="Q8N6M0"/>
<dbReference type="TreeFam" id="TF315010"/>
<dbReference type="PathwayCommons" id="Q8N6M0"/>
<dbReference type="SignaLink" id="Q8N6M0"/>
<dbReference type="SIGNOR" id="Q8N6M0"/>
<dbReference type="BioGRID-ORCS" id="51633">
    <property type="hits" value="34 hits in 1200 CRISPR screens"/>
</dbReference>
<dbReference type="GeneWiki" id="OTUD6B"/>
<dbReference type="GenomeRNAi" id="51633"/>
<dbReference type="Pharos" id="Q8N6M0">
    <property type="development level" value="Tbio"/>
</dbReference>
<dbReference type="PRO" id="PR:Q8N6M0"/>
<dbReference type="Proteomes" id="UP000005640">
    <property type="component" value="Chromosome 8"/>
</dbReference>
<dbReference type="RNAct" id="Q8N6M0">
    <property type="molecule type" value="protein"/>
</dbReference>
<dbReference type="Bgee" id="ENSG00000155100">
    <property type="expression patterns" value="Expressed in sural nerve and 179 other cell types or tissues"/>
</dbReference>
<dbReference type="ExpressionAtlas" id="Q8N6M0">
    <property type="expression patterns" value="baseline and differential"/>
</dbReference>
<dbReference type="GO" id="GO:0004843">
    <property type="term" value="F:cysteine-type deubiquitinase activity"/>
    <property type="evidence" value="ECO:0000314"/>
    <property type="project" value="UniProtKB"/>
</dbReference>
<dbReference type="GO" id="GO:0008283">
    <property type="term" value="P:cell population proliferation"/>
    <property type="evidence" value="ECO:0000314"/>
    <property type="project" value="UniProtKB"/>
</dbReference>
<dbReference type="GO" id="GO:0017148">
    <property type="term" value="P:negative regulation of translation"/>
    <property type="evidence" value="ECO:0000315"/>
    <property type="project" value="UniProtKB"/>
</dbReference>
<dbReference type="GO" id="GO:0045727">
    <property type="term" value="P:positive regulation of translation"/>
    <property type="evidence" value="ECO:0000315"/>
    <property type="project" value="UniProtKB"/>
</dbReference>
<dbReference type="GO" id="GO:0043248">
    <property type="term" value="P:proteasome assembly"/>
    <property type="evidence" value="ECO:0000315"/>
    <property type="project" value="UniProtKB"/>
</dbReference>
<dbReference type="GO" id="GO:0016579">
    <property type="term" value="P:protein deubiquitination"/>
    <property type="evidence" value="ECO:0000314"/>
    <property type="project" value="UniProtKB"/>
</dbReference>
<dbReference type="GO" id="GO:0006508">
    <property type="term" value="P:proteolysis"/>
    <property type="evidence" value="ECO:0007669"/>
    <property type="project" value="UniProtKB-KW"/>
</dbReference>
<dbReference type="CDD" id="cd22761">
    <property type="entry name" value="OTU_OTUD6"/>
    <property type="match status" value="1"/>
</dbReference>
<dbReference type="FunFam" id="3.90.70.80:FF:000003">
    <property type="entry name" value="OTU domain-containing protein 6B"/>
    <property type="match status" value="1"/>
</dbReference>
<dbReference type="Gene3D" id="3.90.70.80">
    <property type="match status" value="1"/>
</dbReference>
<dbReference type="InterPro" id="IPR003323">
    <property type="entry name" value="OTU_dom"/>
</dbReference>
<dbReference type="InterPro" id="IPR049772">
    <property type="entry name" value="OTU_OTUD6"/>
</dbReference>
<dbReference type="InterPro" id="IPR038765">
    <property type="entry name" value="Papain-like_cys_pep_sf"/>
</dbReference>
<dbReference type="InterPro" id="IPR050704">
    <property type="entry name" value="Peptidase_C85-like"/>
</dbReference>
<dbReference type="PANTHER" id="PTHR12419:SF21">
    <property type="entry name" value="DEUBIQUITINASE OTUD6B"/>
    <property type="match status" value="1"/>
</dbReference>
<dbReference type="PANTHER" id="PTHR12419">
    <property type="entry name" value="OTU DOMAIN CONTAINING PROTEIN"/>
    <property type="match status" value="1"/>
</dbReference>
<dbReference type="Pfam" id="PF02338">
    <property type="entry name" value="OTU"/>
    <property type="match status" value="1"/>
</dbReference>
<dbReference type="SUPFAM" id="SSF54001">
    <property type="entry name" value="Cysteine proteinases"/>
    <property type="match status" value="1"/>
</dbReference>
<dbReference type="PROSITE" id="PS50802">
    <property type="entry name" value="OTU"/>
    <property type="match status" value="1"/>
</dbReference>
<comment type="function">
    <molecule>Isoform 1</molecule>
    <text evidence="4 6 7">Deubiquitinating enzyme that may play a role in the ubiquitin-dependent regulation of protein synthesis, downstream of mTORC1 (PubMed:21267069, PubMed:27864334). May associate with the protein synthesis initiation complex and modify its ubiquitination to repress translation (PubMed:27864334). May also repress DNA synthesis and modify different cellular targets thereby regulating cell growth and proliferation (PubMed:27864334). May also play a role in proteasome assembly and function (PubMed:28343629).</text>
</comment>
<comment type="function">
    <molecule>Isoform 2</molecule>
    <text evidence="6">Stimulates protein synthesis. Influences the expression of CCND1/cyclin D1 by promoting its translation and regulates MYC/c-Myc protein stability.</text>
</comment>
<comment type="catalytic activity">
    <reaction evidence="4">
        <text>Thiol-dependent hydrolysis of ester, thioester, amide, peptide and isopeptide bonds formed by the C-terminal Gly of ubiquitin (a 76-residue protein attached to proteins as an intracellular targeting signal).</text>
        <dbReference type="EC" id="3.4.19.12"/>
    </reaction>
</comment>
<comment type="subunit">
    <text evidence="6">Interacts with the eukaryotic translation initiation factor 4F complex.</text>
</comment>
<comment type="interaction">
    <interactant intactId="EBI-2510892">
        <id>Q8N6M0</id>
    </interactant>
    <interactant intactId="EBI-935503">
        <id>Q9H0C5</id>
        <label>BTBD1</label>
    </interactant>
    <organismsDiffer>false</organismsDiffer>
    <experiments>4</experiments>
</comment>
<comment type="interaction">
    <interactant intactId="EBI-2510892">
        <id>Q8N6M0</id>
    </interactant>
    <interactant intactId="EBI-1058491">
        <id>Q96FW1</id>
        <label>OTUB1</label>
    </interactant>
    <organismsDiffer>false</organismsDiffer>
    <experiments>2</experiments>
</comment>
<comment type="alternative products">
    <event type="alternative splicing"/>
    <isoform>
        <id>Q8N6M0-1</id>
        <name>1</name>
        <name evidence="10">OTUD6B-1</name>
        <sequence type="displayed"/>
    </isoform>
    <isoform>
        <id>Q8N6M0-2</id>
        <name>2</name>
        <name evidence="10">OTUD6B-2</name>
        <sequence type="described" ref="VSP_055378"/>
    </isoform>
</comment>
<comment type="disease" evidence="7">
    <disease id="DI-04997">
        <name>Intellectual developmental disorder with dysmorphic facies, seizures, and distal limb anomalies</name>
        <acronym>IDDFSDA</acronym>
        <description>An autosomal recessive severe multisystem disorder characterized by poor overall growth, developmental delay, early-onset seizures, intellectual disability, and dysmorphic features. Additional features include microcephaly, absent speech, hypotonia, feeding difficulties, structural brain abnormalities, congenital malformations including congenital heart disease, and musculoskeletal features.</description>
        <dbReference type="MIM" id="617452"/>
    </disease>
    <text>The disease is caused by variants affecting the gene represented in this entry.</text>
</comment>
<comment type="caution">
    <text evidence="4 5 6 7">Initially, no deubiquitinase activity could be detected when tested (PubMed:23827681). Other studies, show an obvious deubiquitinase activity (PubMed:21267069, PubMed:27864334, PubMed:28343629).</text>
</comment>